<reference key="1">
    <citation type="journal article" date="2003" name="Acta Virol.">
        <title>Identification of a novel human MON1/SAND family protein in human fibroblasts induced by herpes simplex virus 1 binding.</title>
        <authorList>
            <person name="Dong S.Z."/>
            <person name="Dong C.H."/>
            <person name="Liu L.D."/>
            <person name="Li Q.H."/>
        </authorList>
    </citation>
    <scope>NUCLEOTIDE SEQUENCE [MRNA] (ISOFORM 1)</scope>
    <scope>INDUCTION BY HSV-1</scope>
    <source>
        <tissue>Lung</tissue>
    </source>
</reference>
<reference key="2">
    <citation type="journal article" date="1998" name="DNA Res.">
        <title>Prediction of the coding sequences of unidentified human genes. XII. The complete sequences of 100 new cDNA clones from brain which code for large proteins in vitro.</title>
        <authorList>
            <person name="Nagase T."/>
            <person name="Ishikawa K."/>
            <person name="Suyama M."/>
            <person name="Kikuno R."/>
            <person name="Hirosawa M."/>
            <person name="Miyajima N."/>
            <person name="Tanaka A."/>
            <person name="Kotani H."/>
            <person name="Nomura N."/>
            <person name="Ohara O."/>
        </authorList>
    </citation>
    <scope>NUCLEOTIDE SEQUENCE [LARGE SCALE MRNA] (ISOFORM 1)</scope>
    <source>
        <tissue>Brain</tissue>
    </source>
</reference>
<reference key="3">
    <citation type="journal article" date="2004" name="Nat. Genet.">
        <title>Complete sequencing and characterization of 21,243 full-length human cDNAs.</title>
        <authorList>
            <person name="Ota T."/>
            <person name="Suzuki Y."/>
            <person name="Nishikawa T."/>
            <person name="Otsuki T."/>
            <person name="Sugiyama T."/>
            <person name="Irie R."/>
            <person name="Wakamatsu A."/>
            <person name="Hayashi K."/>
            <person name="Sato H."/>
            <person name="Nagai K."/>
            <person name="Kimura K."/>
            <person name="Makita H."/>
            <person name="Sekine M."/>
            <person name="Obayashi M."/>
            <person name="Nishi T."/>
            <person name="Shibahara T."/>
            <person name="Tanaka T."/>
            <person name="Ishii S."/>
            <person name="Yamamoto J."/>
            <person name="Saito K."/>
            <person name="Kawai Y."/>
            <person name="Isono Y."/>
            <person name="Nakamura Y."/>
            <person name="Nagahari K."/>
            <person name="Murakami K."/>
            <person name="Yasuda T."/>
            <person name="Iwayanagi T."/>
            <person name="Wagatsuma M."/>
            <person name="Shiratori A."/>
            <person name="Sudo H."/>
            <person name="Hosoiri T."/>
            <person name="Kaku Y."/>
            <person name="Kodaira H."/>
            <person name="Kondo H."/>
            <person name="Sugawara M."/>
            <person name="Takahashi M."/>
            <person name="Kanda K."/>
            <person name="Yokoi T."/>
            <person name="Furuya T."/>
            <person name="Kikkawa E."/>
            <person name="Omura Y."/>
            <person name="Abe K."/>
            <person name="Kamihara K."/>
            <person name="Katsuta N."/>
            <person name="Sato K."/>
            <person name="Tanikawa M."/>
            <person name="Yamazaki M."/>
            <person name="Ninomiya K."/>
            <person name="Ishibashi T."/>
            <person name="Yamashita H."/>
            <person name="Murakawa K."/>
            <person name="Fujimori K."/>
            <person name="Tanai H."/>
            <person name="Kimata M."/>
            <person name="Watanabe M."/>
            <person name="Hiraoka S."/>
            <person name="Chiba Y."/>
            <person name="Ishida S."/>
            <person name="Ono Y."/>
            <person name="Takiguchi S."/>
            <person name="Watanabe S."/>
            <person name="Yosida M."/>
            <person name="Hotuta T."/>
            <person name="Kusano J."/>
            <person name="Kanehori K."/>
            <person name="Takahashi-Fujii A."/>
            <person name="Hara H."/>
            <person name="Tanase T.-O."/>
            <person name="Nomura Y."/>
            <person name="Togiya S."/>
            <person name="Komai F."/>
            <person name="Hara R."/>
            <person name="Takeuchi K."/>
            <person name="Arita M."/>
            <person name="Imose N."/>
            <person name="Musashino K."/>
            <person name="Yuuki H."/>
            <person name="Oshima A."/>
            <person name="Sasaki N."/>
            <person name="Aotsuka S."/>
            <person name="Yoshikawa Y."/>
            <person name="Matsunawa H."/>
            <person name="Ichihara T."/>
            <person name="Shiohata N."/>
            <person name="Sano S."/>
            <person name="Moriya S."/>
            <person name="Momiyama H."/>
            <person name="Satoh N."/>
            <person name="Takami S."/>
            <person name="Terashima Y."/>
            <person name="Suzuki O."/>
            <person name="Nakagawa S."/>
            <person name="Senoh A."/>
            <person name="Mizoguchi H."/>
            <person name="Goto Y."/>
            <person name="Shimizu F."/>
            <person name="Wakebe H."/>
            <person name="Hishigaki H."/>
            <person name="Watanabe T."/>
            <person name="Sugiyama A."/>
            <person name="Takemoto M."/>
            <person name="Kawakami B."/>
            <person name="Yamazaki M."/>
            <person name="Watanabe K."/>
            <person name="Kumagai A."/>
            <person name="Itakura S."/>
            <person name="Fukuzumi Y."/>
            <person name="Fujimori Y."/>
            <person name="Komiyama M."/>
            <person name="Tashiro H."/>
            <person name="Tanigami A."/>
            <person name="Fujiwara T."/>
            <person name="Ono T."/>
            <person name="Yamada K."/>
            <person name="Fujii Y."/>
            <person name="Ozaki K."/>
            <person name="Hirao M."/>
            <person name="Ohmori Y."/>
            <person name="Kawabata A."/>
            <person name="Hikiji T."/>
            <person name="Kobatake N."/>
            <person name="Inagaki H."/>
            <person name="Ikema Y."/>
            <person name="Okamoto S."/>
            <person name="Okitani R."/>
            <person name="Kawakami T."/>
            <person name="Noguchi S."/>
            <person name="Itoh T."/>
            <person name="Shigeta K."/>
            <person name="Senba T."/>
            <person name="Matsumura K."/>
            <person name="Nakajima Y."/>
            <person name="Mizuno T."/>
            <person name="Morinaga M."/>
            <person name="Sasaki M."/>
            <person name="Togashi T."/>
            <person name="Oyama M."/>
            <person name="Hata H."/>
            <person name="Watanabe M."/>
            <person name="Komatsu T."/>
            <person name="Mizushima-Sugano J."/>
            <person name="Satoh T."/>
            <person name="Shirai Y."/>
            <person name="Takahashi Y."/>
            <person name="Nakagawa K."/>
            <person name="Okumura K."/>
            <person name="Nagase T."/>
            <person name="Nomura N."/>
            <person name="Kikuchi H."/>
            <person name="Masuho Y."/>
            <person name="Yamashita R."/>
            <person name="Nakai K."/>
            <person name="Yada T."/>
            <person name="Nakamura Y."/>
            <person name="Ohara O."/>
            <person name="Isogai T."/>
            <person name="Sugano S."/>
        </authorList>
    </citation>
    <scope>NUCLEOTIDE SEQUENCE [LARGE SCALE MRNA] (ISOFORM 2)</scope>
    <source>
        <tissue>Urinary bladder</tissue>
    </source>
</reference>
<reference key="4">
    <citation type="journal article" date="2004" name="Nature">
        <title>The sequence and analysis of duplication-rich human chromosome 16.</title>
        <authorList>
            <person name="Martin J."/>
            <person name="Han C."/>
            <person name="Gordon L.A."/>
            <person name="Terry A."/>
            <person name="Prabhakar S."/>
            <person name="She X."/>
            <person name="Xie G."/>
            <person name="Hellsten U."/>
            <person name="Chan Y.M."/>
            <person name="Altherr M."/>
            <person name="Couronne O."/>
            <person name="Aerts A."/>
            <person name="Bajorek E."/>
            <person name="Black S."/>
            <person name="Blumer H."/>
            <person name="Branscomb E."/>
            <person name="Brown N.C."/>
            <person name="Bruno W.J."/>
            <person name="Buckingham J.M."/>
            <person name="Callen D.F."/>
            <person name="Campbell C.S."/>
            <person name="Campbell M.L."/>
            <person name="Campbell E.W."/>
            <person name="Caoile C."/>
            <person name="Challacombe J.F."/>
            <person name="Chasteen L.A."/>
            <person name="Chertkov O."/>
            <person name="Chi H.C."/>
            <person name="Christensen M."/>
            <person name="Clark L.M."/>
            <person name="Cohn J.D."/>
            <person name="Denys M."/>
            <person name="Detter J.C."/>
            <person name="Dickson M."/>
            <person name="Dimitrijevic-Bussod M."/>
            <person name="Escobar J."/>
            <person name="Fawcett J.J."/>
            <person name="Flowers D."/>
            <person name="Fotopulos D."/>
            <person name="Glavina T."/>
            <person name="Gomez M."/>
            <person name="Gonzales E."/>
            <person name="Goodstein D."/>
            <person name="Goodwin L.A."/>
            <person name="Grady D.L."/>
            <person name="Grigoriev I."/>
            <person name="Groza M."/>
            <person name="Hammon N."/>
            <person name="Hawkins T."/>
            <person name="Haydu L."/>
            <person name="Hildebrand C.E."/>
            <person name="Huang W."/>
            <person name="Israni S."/>
            <person name="Jett J."/>
            <person name="Jewett P.B."/>
            <person name="Kadner K."/>
            <person name="Kimball H."/>
            <person name="Kobayashi A."/>
            <person name="Krawczyk M.-C."/>
            <person name="Leyba T."/>
            <person name="Longmire J.L."/>
            <person name="Lopez F."/>
            <person name="Lou Y."/>
            <person name="Lowry S."/>
            <person name="Ludeman T."/>
            <person name="Manohar C.F."/>
            <person name="Mark G.A."/>
            <person name="McMurray K.L."/>
            <person name="Meincke L.J."/>
            <person name="Morgan J."/>
            <person name="Moyzis R.K."/>
            <person name="Mundt M.O."/>
            <person name="Munk A.C."/>
            <person name="Nandkeshwar R.D."/>
            <person name="Pitluck S."/>
            <person name="Pollard M."/>
            <person name="Predki P."/>
            <person name="Parson-Quintana B."/>
            <person name="Ramirez L."/>
            <person name="Rash S."/>
            <person name="Retterer J."/>
            <person name="Ricke D.O."/>
            <person name="Robinson D.L."/>
            <person name="Rodriguez A."/>
            <person name="Salamov A."/>
            <person name="Saunders E.H."/>
            <person name="Scott D."/>
            <person name="Shough T."/>
            <person name="Stallings R.L."/>
            <person name="Stalvey M."/>
            <person name="Sutherland R.D."/>
            <person name="Tapia R."/>
            <person name="Tesmer J.G."/>
            <person name="Thayer N."/>
            <person name="Thompson L.S."/>
            <person name="Tice H."/>
            <person name="Torney D.C."/>
            <person name="Tran-Gyamfi M."/>
            <person name="Tsai M."/>
            <person name="Ulanovsky L.E."/>
            <person name="Ustaszewska A."/>
            <person name="Vo N."/>
            <person name="White P.S."/>
            <person name="Williams A.L."/>
            <person name="Wills P.L."/>
            <person name="Wu J.-R."/>
            <person name="Wu K."/>
            <person name="Yang J."/>
            <person name="DeJong P."/>
            <person name="Bruce D."/>
            <person name="Doggett N.A."/>
            <person name="Deaven L."/>
            <person name="Schmutz J."/>
            <person name="Grimwood J."/>
            <person name="Richardson P."/>
            <person name="Rokhsar D.S."/>
            <person name="Eichler E.E."/>
            <person name="Gilna P."/>
            <person name="Lucas S.M."/>
            <person name="Myers R.M."/>
            <person name="Rubin E.M."/>
            <person name="Pennacchio L.A."/>
        </authorList>
    </citation>
    <scope>NUCLEOTIDE SEQUENCE [LARGE SCALE GENOMIC DNA]</scope>
</reference>
<reference key="5">
    <citation type="journal article" date="2004" name="Genome Res.">
        <title>The status, quality, and expansion of the NIH full-length cDNA project: the Mammalian Gene Collection (MGC).</title>
        <authorList>
            <consortium name="The MGC Project Team"/>
        </authorList>
    </citation>
    <scope>NUCLEOTIDE SEQUENCE [LARGE SCALE MRNA] (ISOFORM 1)</scope>
    <source>
        <tissue>Eye</tissue>
    </source>
</reference>
<reference key="6">
    <citation type="journal article" date="2009" name="Anal. Chem.">
        <title>Lys-N and trypsin cover complementary parts of the phosphoproteome in a refined SCX-based approach.</title>
        <authorList>
            <person name="Gauci S."/>
            <person name="Helbig A.O."/>
            <person name="Slijper M."/>
            <person name="Krijgsveld J."/>
            <person name="Heck A.J."/>
            <person name="Mohammed S."/>
        </authorList>
    </citation>
    <scope>ACETYLATION [LARGE SCALE ANALYSIS] AT MET-1</scope>
    <scope>IDENTIFICATION BY MASS SPECTROMETRY [LARGE SCALE ANALYSIS]</scope>
</reference>
<reference key="7">
    <citation type="journal article" date="2011" name="BMC Syst. Biol.">
        <title>Initial characterization of the human central proteome.</title>
        <authorList>
            <person name="Burkard T.R."/>
            <person name="Planyavsky M."/>
            <person name="Kaupe I."/>
            <person name="Breitwieser F.P."/>
            <person name="Buerckstuemmer T."/>
            <person name="Bennett K.L."/>
            <person name="Superti-Furga G."/>
            <person name="Colinge J."/>
        </authorList>
    </citation>
    <scope>IDENTIFICATION BY MASS SPECTROMETRY [LARGE SCALE ANALYSIS]</scope>
</reference>
<reference key="8">
    <citation type="journal article" date="2011" name="Sci. China Life Sci.">
        <title>HSV-1 stimulation-related protein HSRG1 inhibits viral gene transcriptional elongation by interacting with Cyclin T2.</title>
        <authorList>
            <person name="Wu W."/>
            <person name="Yu X."/>
            <person name="Li W."/>
            <person name="Guo L."/>
            <person name="Liu L."/>
            <person name="Wang L."/>
            <person name="Li Q."/>
        </authorList>
    </citation>
    <scope>INTERACTION WITH CCNT2</scope>
</reference>
<reference key="9">
    <citation type="journal article" date="2012" name="Proc. Natl. Acad. Sci. U.S.A.">
        <title>N-terminal acetylome analyses and functional insights of the N-terminal acetyltransferase NatB.</title>
        <authorList>
            <person name="Van Damme P."/>
            <person name="Lasa M."/>
            <person name="Polevoda B."/>
            <person name="Gazquez C."/>
            <person name="Elosegui-Artola A."/>
            <person name="Kim D.S."/>
            <person name="De Juan-Pardo E."/>
            <person name="Demeyer K."/>
            <person name="Hole K."/>
            <person name="Larrea E."/>
            <person name="Timmerman E."/>
            <person name="Prieto J."/>
            <person name="Arnesen T."/>
            <person name="Sherman F."/>
            <person name="Gevaert K."/>
            <person name="Aldabe R."/>
        </authorList>
    </citation>
    <scope>ACETYLATION [LARGE SCALE ANALYSIS] AT MET-1</scope>
    <scope>IDENTIFICATION BY MASS SPECTROMETRY [LARGE SCALE ANALYSIS]</scope>
</reference>
<reference key="10">
    <citation type="journal article" date="2013" name="J. Proteome Res.">
        <title>Toward a comprehensive characterization of a human cancer cell phosphoproteome.</title>
        <authorList>
            <person name="Zhou H."/>
            <person name="Di Palma S."/>
            <person name="Preisinger C."/>
            <person name="Peng M."/>
            <person name="Polat A.N."/>
            <person name="Heck A.J."/>
            <person name="Mohammed S."/>
        </authorList>
    </citation>
    <scope>PHOSPHORYLATION [LARGE SCALE ANALYSIS] AT SER-59 AND SER-61</scope>
    <scope>IDENTIFICATION BY MASS SPECTROMETRY [LARGE SCALE ANALYSIS]</scope>
    <source>
        <tissue>Cervix carcinoma</tissue>
        <tissue>Erythroleukemia</tissue>
    </source>
</reference>
<reference key="11">
    <citation type="journal article" date="2017" name="Mol. Cell. Biol.">
        <title>Systematic analysis of human cells lacking ATG8 proteins uncovers roles for GABARAPs and the CCZ1/MON1 regulator C18orf8/RMC1 in macro and selective autophagic flux.</title>
        <authorList>
            <person name="Pontano Vaites L."/>
            <person name="Paulo J.A."/>
            <person name="Huttlin E.L."/>
            <person name="Harper J.W."/>
        </authorList>
    </citation>
    <scope>IDENTIFICATION IN A COMPLEX RMC1; CCZ1; MON1A AND MON1B</scope>
</reference>
<feature type="chain" id="PRO_0000285765" description="Vacuolar fusion protein MON1 homolog B">
    <location>
        <begin position="1"/>
        <end position="547"/>
    </location>
</feature>
<feature type="region of interest" description="Disordered" evidence="1">
    <location>
        <begin position="1"/>
        <end position="106"/>
    </location>
</feature>
<feature type="compositionally biased region" description="Low complexity" evidence="1">
    <location>
        <begin position="1"/>
        <end position="15"/>
    </location>
</feature>
<feature type="modified residue" description="N-acetylmethionine" evidence="7 8">
    <location>
        <position position="1"/>
    </location>
</feature>
<feature type="modified residue" description="Phosphoserine" evidence="9">
    <location>
        <position position="59"/>
    </location>
</feature>
<feature type="modified residue" description="Phosphoserine" evidence="9">
    <location>
        <position position="61"/>
    </location>
</feature>
<feature type="splice variant" id="VSP_054664" description="In isoform 2." evidence="5">
    <original>MEVGGDTAAPAP</original>
    <variation>MVSGQLRFGVKT</variation>
    <location>
        <begin position="1"/>
        <end position="12"/>
    </location>
</feature>
<feature type="splice variant" id="VSP_054665" description="In isoform 2." evidence="5">
    <location>
        <begin position="13"/>
        <end position="158"/>
    </location>
</feature>
<organism>
    <name type="scientific">Homo sapiens</name>
    <name type="common">Human</name>
    <dbReference type="NCBI Taxonomy" id="9606"/>
    <lineage>
        <taxon>Eukaryota</taxon>
        <taxon>Metazoa</taxon>
        <taxon>Chordata</taxon>
        <taxon>Craniata</taxon>
        <taxon>Vertebrata</taxon>
        <taxon>Euteleostomi</taxon>
        <taxon>Mammalia</taxon>
        <taxon>Eutheria</taxon>
        <taxon>Euarchontoglires</taxon>
        <taxon>Primates</taxon>
        <taxon>Haplorrhini</taxon>
        <taxon>Catarrhini</taxon>
        <taxon>Hominidae</taxon>
        <taxon>Homo</taxon>
    </lineage>
</organism>
<sequence length="547" mass="59217">MEVGGDTAAPAPGGAEDLEDTQFPSEEAREGGGVHAVPPDPEDEGLEETGSKDKDQPPSPSPPPQSEALSSTSRLWSPAAPENSPTCSPESSSGGQGGDPSDEEWRSQRKHVFVLSEAGKPIYSRYGSVEALSATMGVMTALVSFVQSAGDAIRAIYAEDHKLVFLQQGPLLLVAMSRTSQSAAQLRGELLAVHAQIVSTLTRASVARIFAHKQNYDLRRLLAGSERTLDRLLDSMEQDPGALLLGAVRCVPLARPLRDALGALLRRCTAPGLALSVLAVGGRLITAAQERNVLAECRLDPADLQLLLDWVGAPAFAAGEAWAPVCLPRFNPDGFFYAYVARLDAMPVCLLLLGTQREAFHAMAACRRLVEDGMHALGAMRALGEAASFSNASSASAPAYSVQAVGAPGLRHFLYKPLDIPDHHRQLPQFTSPELEAPYSREEERQRLSDLYHRLHARLHSTSRPLRLIYHVAEKETLLAWVTSKFELYTCLSPLVTKAGAILVVTKLLRWVKKEEDRLFIRYPPKYSTPPATSTDQAAHNGLFTGL</sequence>
<proteinExistence type="evidence at protein level"/>
<keyword id="KW-0007">Acetylation</keyword>
<keyword id="KW-0025">Alternative splicing</keyword>
<keyword id="KW-0597">Phosphoprotein</keyword>
<keyword id="KW-1267">Proteomics identification</keyword>
<keyword id="KW-1185">Reference proteome</keyword>
<name>MON1B_HUMAN</name>
<protein>
    <recommendedName>
        <fullName>Vacuolar fusion protein MON1 homolog B</fullName>
    </recommendedName>
    <alternativeName>
        <fullName>HSV-1 stimulation-related gene 1 protein</fullName>
    </alternativeName>
    <alternativeName>
        <fullName>HSV-I stimulating-related protein</fullName>
    </alternativeName>
</protein>
<gene>
    <name type="primary">MON1B</name>
    <name type="synonym">HSRG1</name>
    <name type="synonym">KIAA0872</name>
    <name type="synonym">SAND2</name>
</gene>
<dbReference type="EMBL" id="AF442486">
    <property type="protein sequence ID" value="AAL35292.1"/>
    <property type="molecule type" value="mRNA"/>
</dbReference>
<dbReference type="EMBL" id="AB020679">
    <property type="protein sequence ID" value="BAA74895.2"/>
    <property type="molecule type" value="mRNA"/>
</dbReference>
<dbReference type="EMBL" id="AK293392">
    <property type="protein sequence ID" value="BAG56901.1"/>
    <property type="molecule type" value="mRNA"/>
</dbReference>
<dbReference type="EMBL" id="AC009139">
    <property type="status" value="NOT_ANNOTATED_CDS"/>
    <property type="molecule type" value="Genomic_DNA"/>
</dbReference>
<dbReference type="EMBL" id="BC024277">
    <property type="protein sequence ID" value="AAH24277.1"/>
    <property type="molecule type" value="mRNA"/>
</dbReference>
<dbReference type="CCDS" id="CCDS10925.1">
    <molecule id="Q7L1V2-1"/>
</dbReference>
<dbReference type="CCDS" id="CCDS67082.1">
    <molecule id="Q7L1V2-2"/>
</dbReference>
<dbReference type="RefSeq" id="NP_001273568.1">
    <property type="nucleotide sequence ID" value="NM_001286639.1"/>
</dbReference>
<dbReference type="RefSeq" id="NP_001273569.1">
    <molecule id="Q7L1V2-2"/>
    <property type="nucleotide sequence ID" value="NM_001286640.2"/>
</dbReference>
<dbReference type="RefSeq" id="NP_055755.1">
    <molecule id="Q7L1V2-1"/>
    <property type="nucleotide sequence ID" value="NM_014940.4"/>
</dbReference>
<dbReference type="SMR" id="Q7L1V2"/>
<dbReference type="BioGRID" id="116546">
    <property type="interactions" value="21"/>
</dbReference>
<dbReference type="ComplexPortal" id="CPX-8152">
    <property type="entry name" value="MON1-CCZ1 guanyl-nucleotide exchange factor complex, MON1B variant"/>
</dbReference>
<dbReference type="ComplexPortal" id="CPX-8166">
    <property type="entry name" value="MON1-CCZ1B guanyl-nucleotide exchange factor complex, MON1B variant"/>
</dbReference>
<dbReference type="CORUM" id="Q7L1V2"/>
<dbReference type="FunCoup" id="Q7L1V2">
    <property type="interactions" value="1615"/>
</dbReference>
<dbReference type="IntAct" id="Q7L1V2">
    <property type="interactions" value="19"/>
</dbReference>
<dbReference type="STRING" id="9606.ENSP00000248248"/>
<dbReference type="iPTMnet" id="Q7L1V2"/>
<dbReference type="PhosphoSitePlus" id="Q7L1V2"/>
<dbReference type="BioMuta" id="MON1B"/>
<dbReference type="DMDM" id="74738536"/>
<dbReference type="jPOST" id="Q7L1V2"/>
<dbReference type="MassIVE" id="Q7L1V2"/>
<dbReference type="PaxDb" id="9606-ENSP00000248248"/>
<dbReference type="PeptideAtlas" id="Q7L1V2"/>
<dbReference type="ProteomicsDB" id="3908"/>
<dbReference type="ProteomicsDB" id="68751">
    <molecule id="Q7L1V2-1"/>
</dbReference>
<dbReference type="Pumba" id="Q7L1V2"/>
<dbReference type="TopDownProteomics" id="Q7L1V2-1">
    <molecule id="Q7L1V2-1"/>
</dbReference>
<dbReference type="Antibodypedia" id="30376">
    <property type="antibodies" value="99 antibodies from 20 providers"/>
</dbReference>
<dbReference type="DNASU" id="22879"/>
<dbReference type="Ensembl" id="ENST00000248248.8">
    <molecule id="Q7L1V2-1"/>
    <property type="protein sequence ID" value="ENSP00000248248.3"/>
    <property type="gene ID" value="ENSG00000103111.15"/>
</dbReference>
<dbReference type="Ensembl" id="ENST00000545553.1">
    <molecule id="Q7L1V2-2"/>
    <property type="protein sequence ID" value="ENSP00000444881.1"/>
    <property type="gene ID" value="ENSG00000103111.15"/>
</dbReference>
<dbReference type="GeneID" id="22879"/>
<dbReference type="KEGG" id="hsa:22879"/>
<dbReference type="MANE-Select" id="ENST00000248248.8">
    <property type="protein sequence ID" value="ENSP00000248248.3"/>
    <property type="RefSeq nucleotide sequence ID" value="NM_014940.4"/>
    <property type="RefSeq protein sequence ID" value="NP_055755.1"/>
</dbReference>
<dbReference type="UCSC" id="uc002fez.5">
    <molecule id="Q7L1V2-1"/>
    <property type="organism name" value="human"/>
</dbReference>
<dbReference type="AGR" id="HGNC:25020"/>
<dbReference type="CTD" id="22879"/>
<dbReference type="DisGeNET" id="22879"/>
<dbReference type="GeneCards" id="MON1B"/>
<dbReference type="HGNC" id="HGNC:25020">
    <property type="gene designation" value="MON1B"/>
</dbReference>
<dbReference type="HPA" id="ENSG00000103111">
    <property type="expression patterns" value="Low tissue specificity"/>
</dbReference>
<dbReference type="MIM" id="608954">
    <property type="type" value="gene"/>
</dbReference>
<dbReference type="neXtProt" id="NX_Q7L1V2"/>
<dbReference type="OpenTargets" id="ENSG00000103111"/>
<dbReference type="PharmGKB" id="PA142671341"/>
<dbReference type="VEuPathDB" id="HostDB:ENSG00000103111"/>
<dbReference type="eggNOG" id="KOG0997">
    <property type="taxonomic scope" value="Eukaryota"/>
</dbReference>
<dbReference type="GeneTree" id="ENSGT00390000006665"/>
<dbReference type="HOGENOM" id="CLU_014574_4_1_1"/>
<dbReference type="InParanoid" id="Q7L1V2"/>
<dbReference type="OMA" id="TKTCAIT"/>
<dbReference type="OrthoDB" id="272411at2759"/>
<dbReference type="PAN-GO" id="Q7L1V2">
    <property type="GO annotations" value="0 GO annotations based on evolutionary models"/>
</dbReference>
<dbReference type="PhylomeDB" id="Q7L1V2"/>
<dbReference type="PathwayCommons" id="Q7L1V2"/>
<dbReference type="Reactome" id="R-HSA-8876198">
    <property type="pathway name" value="RAB GEFs exchange GTP for GDP on RABs"/>
</dbReference>
<dbReference type="SignaLink" id="Q7L1V2"/>
<dbReference type="BioGRID-ORCS" id="22879">
    <property type="hits" value="16 hits in 1147 CRISPR screens"/>
</dbReference>
<dbReference type="ChiTaRS" id="MON1B">
    <property type="organism name" value="human"/>
</dbReference>
<dbReference type="GenomeRNAi" id="22879"/>
<dbReference type="Pharos" id="Q7L1V2">
    <property type="development level" value="Tbio"/>
</dbReference>
<dbReference type="PRO" id="PR:Q7L1V2"/>
<dbReference type="Proteomes" id="UP000005640">
    <property type="component" value="Chromosome 16"/>
</dbReference>
<dbReference type="RNAct" id="Q7L1V2">
    <property type="molecule type" value="protein"/>
</dbReference>
<dbReference type="Bgee" id="ENSG00000103111">
    <property type="expression patterns" value="Expressed in palpebral conjunctiva and 188 other cell types or tissues"/>
</dbReference>
<dbReference type="ExpressionAtlas" id="Q7L1V2">
    <property type="expression patterns" value="baseline and differential"/>
</dbReference>
<dbReference type="GO" id="GO:0005737">
    <property type="term" value="C:cytoplasm"/>
    <property type="evidence" value="ECO:0000314"/>
    <property type="project" value="UniProtKB"/>
</dbReference>
<dbReference type="GO" id="GO:0035658">
    <property type="term" value="C:Mon1-Ccz1 complex"/>
    <property type="evidence" value="ECO:0000314"/>
    <property type="project" value="UniProtKB"/>
</dbReference>
<dbReference type="GO" id="GO:0019085">
    <property type="term" value="P:early viral transcription"/>
    <property type="evidence" value="ECO:0000314"/>
    <property type="project" value="UniProtKB"/>
</dbReference>
<dbReference type="GO" id="GO:0019086">
    <property type="term" value="P:late viral transcription"/>
    <property type="evidence" value="ECO:0000314"/>
    <property type="project" value="UniProtKB"/>
</dbReference>
<dbReference type="GO" id="GO:0006623">
    <property type="term" value="P:protein targeting to vacuole"/>
    <property type="evidence" value="ECO:0007669"/>
    <property type="project" value="InterPro"/>
</dbReference>
<dbReference type="GO" id="GO:0016192">
    <property type="term" value="P:vesicle-mediated transport"/>
    <property type="evidence" value="ECO:0007669"/>
    <property type="project" value="InterPro"/>
</dbReference>
<dbReference type="InterPro" id="IPR043972">
    <property type="entry name" value="FUZ/MON1/HPS1_longin_1"/>
</dbReference>
<dbReference type="InterPro" id="IPR043971">
    <property type="entry name" value="FUZ/MON1/HPS1_longin_2"/>
</dbReference>
<dbReference type="InterPro" id="IPR043970">
    <property type="entry name" value="FUZ/MON1/HPS1_longin_3"/>
</dbReference>
<dbReference type="InterPro" id="IPR004353">
    <property type="entry name" value="Mon1"/>
</dbReference>
<dbReference type="PANTHER" id="PTHR13027">
    <property type="entry name" value="SAND PROTEIN-RELATED"/>
    <property type="match status" value="1"/>
</dbReference>
<dbReference type="PANTHER" id="PTHR13027:SF13">
    <property type="entry name" value="VACUOLAR FUSION PROTEIN MON1 HOMOLOG B"/>
    <property type="match status" value="1"/>
</dbReference>
<dbReference type="Pfam" id="PF19036">
    <property type="entry name" value="Fuz_longin_1"/>
    <property type="match status" value="1"/>
</dbReference>
<dbReference type="Pfam" id="PF19037">
    <property type="entry name" value="Fuz_longin_2"/>
    <property type="match status" value="1"/>
</dbReference>
<dbReference type="Pfam" id="PF19038">
    <property type="entry name" value="Fuz_longin_3"/>
    <property type="match status" value="1"/>
</dbReference>
<dbReference type="PRINTS" id="PR01546">
    <property type="entry name" value="YEAST73DUF"/>
</dbReference>
<evidence type="ECO:0000256" key="1">
    <source>
        <dbReference type="SAM" id="MobiDB-lite"/>
    </source>
</evidence>
<evidence type="ECO:0000269" key="2">
    <source>
    </source>
</evidence>
<evidence type="ECO:0000269" key="3">
    <source>
    </source>
</evidence>
<evidence type="ECO:0000269" key="4">
    <source>
    </source>
</evidence>
<evidence type="ECO:0000303" key="5">
    <source>
    </source>
</evidence>
<evidence type="ECO:0000305" key="6"/>
<evidence type="ECO:0007744" key="7">
    <source>
    </source>
</evidence>
<evidence type="ECO:0007744" key="8">
    <source>
    </source>
</evidence>
<evidence type="ECO:0007744" key="9">
    <source>
    </source>
</evidence>
<accession>Q7L1V2</accession>
<accession>B4DDZ0</accession>
<accession>O94949</accession>
<comment type="subunit">
    <text evidence="3 4">Interacts with CCNT2; down-regulates CCNT2-mediated activation of viral promoters during herpes simplex virus 1/HHV-1 infection (PubMed:21509660). Found in a complex with RMC1, CCZ1 MON1A and MON1B (PubMed:29038162).</text>
</comment>
<comment type="interaction">
    <interactant intactId="EBI-2655311">
        <id>Q7L1V2</id>
    </interactant>
    <interactant intactId="EBI-1053363">
        <id>Q9P253</id>
        <label>VPS18</label>
    </interactant>
    <organismsDiffer>false</organismsDiffer>
    <experiments>2</experiments>
</comment>
<comment type="alternative products">
    <event type="alternative splicing"/>
    <isoform>
        <id>Q7L1V2-1</id>
        <name>1</name>
        <sequence type="displayed"/>
    </isoform>
    <isoform>
        <id>Q7L1V2-2</id>
        <name>2</name>
        <sequence type="described" ref="VSP_054664 VSP_054665"/>
    </isoform>
</comment>
<comment type="induction">
    <text evidence="2">Induced in fibroblast KMB17 cells by HSV-1.</text>
</comment>
<comment type="similarity">
    <text evidence="6">Belongs to the MON1/SAND family.</text>
</comment>